<sequence>MVLETSEGDTKKFLTNNNNSSASRNNNSHNNNNNNHSPKEIPEETGRSSSTSSNSIPNAHRTNAGQHLLGGSPSSACSTSVSGCGMPSEGLHPTAALQLYAAAAQLAPNGVRVPPWGPFLQFGVPGVFGPNGPFLGRPRFDAASAGGHPNSAAAAAAATQMAAVNASNAFANLTGLSAAALRNVSAAQTTAVAAVASTVATIQHRLMIGNRQSLPPAGPPSEGSNEDGGFPGDGDDDSSAAKRRRSRTNFNSWQLEELERAFSASHYPDIFMREALAMRLDLKESRVAVWFQNRRAKVRKREHTKKGPGRPAHNAQPQTCSGEPIPPNELKAKERARRRKKLAKAIDRQARKLQAKGITVDLEALKAEYISQHKANGTFSDSDLEDDGIQIDVVGGTDSDDEGDSDAVSPVRLGGGGGGGGGTGGGGGGGASSSLHCGLDGDGDSSRAGSFIGGGGSLGSPSSVAPPSMLSNGAVQFGKLEPMDGNESEERDRERDSPKPLLFPAKAFHQLNLQSSQQHHGLVVGQGQGSGSGHGHGHQHNHHQHHLHHGSASASAAAAVANLVHQTSPISMRRSNPFSIESLLFNNT</sequence>
<comment type="function">
    <text evidence="1">Transcription factor that regulates synaptic specificity.</text>
</comment>
<comment type="subcellular location">
    <subcellularLocation>
        <location evidence="2">Nucleus</location>
    </subcellularLocation>
</comment>
<comment type="tissue specificity">
    <text evidence="5">During embryonic and third instar larval stages, expressed in subsets of postmitotic neurons in the central nervous system (CNS) and in the developing epidermis with a segmentally repeated pattern.</text>
</comment>
<comment type="similarity">
    <text evidence="6">Belongs to the paired homeobox family. Unc-4 subfamily.</text>
</comment>
<comment type="sequence caution" evidence="6">
    <conflict type="erroneous initiation">
        <sequence resource="EMBL-CDS" id="AAC36333"/>
    </conflict>
    <text>Truncated N-terminus.</text>
</comment>
<comment type="sequence caution" evidence="6">
    <conflict type="erroneous initiation">
        <sequence resource="EMBL-CDS" id="ABJ17079"/>
    </conflict>
    <text>Truncated N-terminus.</text>
</comment>
<gene>
    <name evidence="8" type="primary">unc-4</name>
    <name type="ORF">CG6269</name>
</gene>
<evidence type="ECO:0000250" key="1">
    <source>
        <dbReference type="UniProtKB" id="P29506"/>
    </source>
</evidence>
<evidence type="ECO:0000255" key="2">
    <source>
        <dbReference type="PROSITE-ProRule" id="PRU00108"/>
    </source>
</evidence>
<evidence type="ECO:0000256" key="3">
    <source>
        <dbReference type="SAM" id="MobiDB-lite"/>
    </source>
</evidence>
<evidence type="ECO:0000269" key="4">
    <source>
    </source>
</evidence>
<evidence type="ECO:0000269" key="5">
    <source>
    </source>
</evidence>
<evidence type="ECO:0000305" key="6"/>
<evidence type="ECO:0000312" key="7">
    <source>
        <dbReference type="EMBL" id="AAC36333.1"/>
    </source>
</evidence>
<evidence type="ECO:0000312" key="8">
    <source>
        <dbReference type="EMBL" id="AAF48762.2"/>
    </source>
</evidence>
<protein>
    <recommendedName>
        <fullName>Homeobox protein unc-4</fullName>
    </recommendedName>
    <alternativeName>
        <fullName>Paired-like homeodomain protein unc-4</fullName>
        <shortName>DPHD-1</shortName>
    </alternativeName>
</protein>
<reference evidence="8" key="1">
    <citation type="journal article" date="2000" name="Science">
        <title>The genome sequence of Drosophila melanogaster.</title>
        <authorList>
            <person name="Adams M.D."/>
            <person name="Celniker S.E."/>
            <person name="Holt R.A."/>
            <person name="Evans C.A."/>
            <person name="Gocayne J.D."/>
            <person name="Amanatides P.G."/>
            <person name="Scherer S.E."/>
            <person name="Li P.W."/>
            <person name="Hoskins R.A."/>
            <person name="Galle R.F."/>
            <person name="George R.A."/>
            <person name="Lewis S.E."/>
            <person name="Richards S."/>
            <person name="Ashburner M."/>
            <person name="Henderson S.N."/>
            <person name="Sutton G.G."/>
            <person name="Wortman J.R."/>
            <person name="Yandell M.D."/>
            <person name="Zhang Q."/>
            <person name="Chen L.X."/>
            <person name="Brandon R.C."/>
            <person name="Rogers Y.-H.C."/>
            <person name="Blazej R.G."/>
            <person name="Champe M."/>
            <person name="Pfeiffer B.D."/>
            <person name="Wan K.H."/>
            <person name="Doyle C."/>
            <person name="Baxter E.G."/>
            <person name="Helt G."/>
            <person name="Nelson C.R."/>
            <person name="Miklos G.L.G."/>
            <person name="Abril J.F."/>
            <person name="Agbayani A."/>
            <person name="An H.-J."/>
            <person name="Andrews-Pfannkoch C."/>
            <person name="Baldwin D."/>
            <person name="Ballew R.M."/>
            <person name="Basu A."/>
            <person name="Baxendale J."/>
            <person name="Bayraktaroglu L."/>
            <person name="Beasley E.M."/>
            <person name="Beeson K.Y."/>
            <person name="Benos P.V."/>
            <person name="Berman B.P."/>
            <person name="Bhandari D."/>
            <person name="Bolshakov S."/>
            <person name="Borkova D."/>
            <person name="Botchan M.R."/>
            <person name="Bouck J."/>
            <person name="Brokstein P."/>
            <person name="Brottier P."/>
            <person name="Burtis K.C."/>
            <person name="Busam D.A."/>
            <person name="Butler H."/>
            <person name="Cadieu E."/>
            <person name="Center A."/>
            <person name="Chandra I."/>
            <person name="Cherry J.M."/>
            <person name="Cawley S."/>
            <person name="Dahlke C."/>
            <person name="Davenport L.B."/>
            <person name="Davies P."/>
            <person name="de Pablos B."/>
            <person name="Delcher A."/>
            <person name="Deng Z."/>
            <person name="Mays A.D."/>
            <person name="Dew I."/>
            <person name="Dietz S.M."/>
            <person name="Dodson K."/>
            <person name="Doup L.E."/>
            <person name="Downes M."/>
            <person name="Dugan-Rocha S."/>
            <person name="Dunkov B.C."/>
            <person name="Dunn P."/>
            <person name="Durbin K.J."/>
            <person name="Evangelista C.C."/>
            <person name="Ferraz C."/>
            <person name="Ferriera S."/>
            <person name="Fleischmann W."/>
            <person name="Fosler C."/>
            <person name="Gabrielian A.E."/>
            <person name="Garg N.S."/>
            <person name="Gelbart W.M."/>
            <person name="Glasser K."/>
            <person name="Glodek A."/>
            <person name="Gong F."/>
            <person name="Gorrell J.H."/>
            <person name="Gu Z."/>
            <person name="Guan P."/>
            <person name="Harris M."/>
            <person name="Harris N.L."/>
            <person name="Harvey D.A."/>
            <person name="Heiman T.J."/>
            <person name="Hernandez J.R."/>
            <person name="Houck J."/>
            <person name="Hostin D."/>
            <person name="Houston K.A."/>
            <person name="Howland T.J."/>
            <person name="Wei M.-H."/>
            <person name="Ibegwam C."/>
            <person name="Jalali M."/>
            <person name="Kalush F."/>
            <person name="Karpen G.H."/>
            <person name="Ke Z."/>
            <person name="Kennison J.A."/>
            <person name="Ketchum K.A."/>
            <person name="Kimmel B.E."/>
            <person name="Kodira C.D."/>
            <person name="Kraft C.L."/>
            <person name="Kravitz S."/>
            <person name="Kulp D."/>
            <person name="Lai Z."/>
            <person name="Lasko P."/>
            <person name="Lei Y."/>
            <person name="Levitsky A.A."/>
            <person name="Li J.H."/>
            <person name="Li Z."/>
            <person name="Liang Y."/>
            <person name="Lin X."/>
            <person name="Liu X."/>
            <person name="Mattei B."/>
            <person name="McIntosh T.C."/>
            <person name="McLeod M.P."/>
            <person name="McPherson D."/>
            <person name="Merkulov G."/>
            <person name="Milshina N.V."/>
            <person name="Mobarry C."/>
            <person name="Morris J."/>
            <person name="Moshrefi A."/>
            <person name="Mount S.M."/>
            <person name="Moy M."/>
            <person name="Murphy B."/>
            <person name="Murphy L."/>
            <person name="Muzny D.M."/>
            <person name="Nelson D.L."/>
            <person name="Nelson D.R."/>
            <person name="Nelson K.A."/>
            <person name="Nixon K."/>
            <person name="Nusskern D.R."/>
            <person name="Pacleb J.M."/>
            <person name="Palazzolo M."/>
            <person name="Pittman G.S."/>
            <person name="Pan S."/>
            <person name="Pollard J."/>
            <person name="Puri V."/>
            <person name="Reese M.G."/>
            <person name="Reinert K."/>
            <person name="Remington K."/>
            <person name="Saunders R.D.C."/>
            <person name="Scheeler F."/>
            <person name="Shen H."/>
            <person name="Shue B.C."/>
            <person name="Siden-Kiamos I."/>
            <person name="Simpson M."/>
            <person name="Skupski M.P."/>
            <person name="Smith T.J."/>
            <person name="Spier E."/>
            <person name="Spradling A.C."/>
            <person name="Stapleton M."/>
            <person name="Strong R."/>
            <person name="Sun E."/>
            <person name="Svirskas R."/>
            <person name="Tector C."/>
            <person name="Turner R."/>
            <person name="Venter E."/>
            <person name="Wang A.H."/>
            <person name="Wang X."/>
            <person name="Wang Z.-Y."/>
            <person name="Wassarman D.A."/>
            <person name="Weinstock G.M."/>
            <person name="Weissenbach J."/>
            <person name="Williams S.M."/>
            <person name="Woodage T."/>
            <person name="Worley K.C."/>
            <person name="Wu D."/>
            <person name="Yang S."/>
            <person name="Yao Q.A."/>
            <person name="Ye J."/>
            <person name="Yeh R.-F."/>
            <person name="Zaveri J.S."/>
            <person name="Zhan M."/>
            <person name="Zhang G."/>
            <person name="Zhao Q."/>
            <person name="Zheng L."/>
            <person name="Zheng X.H."/>
            <person name="Zhong F.N."/>
            <person name="Zhong W."/>
            <person name="Zhou X."/>
            <person name="Zhu S.C."/>
            <person name="Zhu X."/>
            <person name="Smith H.O."/>
            <person name="Gibbs R.A."/>
            <person name="Myers E.W."/>
            <person name="Rubin G.M."/>
            <person name="Venter J.C."/>
        </authorList>
    </citation>
    <scope>NUCLEOTIDE SEQUENCE [LARGE SCALE GENOMIC DNA]</scope>
    <source>
        <strain evidence="4">Berkeley</strain>
    </source>
</reference>
<reference key="2">
    <citation type="journal article" date="2002" name="Genome Biol.">
        <title>Annotation of the Drosophila melanogaster euchromatic genome: a systematic review.</title>
        <authorList>
            <person name="Misra S."/>
            <person name="Crosby M.A."/>
            <person name="Mungall C.J."/>
            <person name="Matthews B.B."/>
            <person name="Campbell K.S."/>
            <person name="Hradecky P."/>
            <person name="Huang Y."/>
            <person name="Kaminker J.S."/>
            <person name="Millburn G.H."/>
            <person name="Prochnik S.E."/>
            <person name="Smith C.D."/>
            <person name="Tupy J.L."/>
            <person name="Whitfield E.J."/>
            <person name="Bayraktaroglu L."/>
            <person name="Berman B.P."/>
            <person name="Bettencourt B.R."/>
            <person name="Celniker S.E."/>
            <person name="de Grey A.D.N.J."/>
            <person name="Drysdale R.A."/>
            <person name="Harris N.L."/>
            <person name="Richter J."/>
            <person name="Russo S."/>
            <person name="Schroeder A.J."/>
            <person name="Shu S.Q."/>
            <person name="Stapleton M."/>
            <person name="Yamada C."/>
            <person name="Ashburner M."/>
            <person name="Gelbart W.M."/>
            <person name="Rubin G.M."/>
            <person name="Lewis S.E."/>
        </authorList>
    </citation>
    <scope>GENOME REANNOTATION</scope>
    <source>
        <strain>Berkeley</strain>
    </source>
</reference>
<reference evidence="7" key="3">
    <citation type="journal article" date="1998" name="Neurosci. Lett.">
        <title>A novel Drosophila paired-like homeobox gene related to Caenorhabditis elegans unc-4 is expressed in subsets of postmitotic neurons and epidermal cells.</title>
        <authorList>
            <person name="Tabuchi K."/>
            <person name="Yoshikawa S."/>
            <person name="Yuasa Y."/>
            <person name="Sawamoto K."/>
            <person name="Okano H."/>
        </authorList>
    </citation>
    <scope>NUCLEOTIDE SEQUENCE [MRNA] OF 152-588</scope>
    <scope>TISSUE SPECIFICITY</scope>
    <source>
        <strain evidence="7">Canton-S</strain>
        <tissue evidence="5">Embryo</tissue>
    </source>
</reference>
<reference key="4">
    <citation type="submission" date="2006-10" db="EMBL/GenBank/DDBJ databases">
        <authorList>
            <person name="Stapleton M."/>
            <person name="Carlson J.W."/>
            <person name="Frise E."/>
            <person name="Kapadia B."/>
            <person name="Park S."/>
            <person name="Wan K.H."/>
            <person name="Yu C."/>
            <person name="Celniker S.E."/>
        </authorList>
    </citation>
    <scope>NUCLEOTIDE SEQUENCE [LARGE SCALE MRNA] OF 156-588</scope>
    <source>
        <strain>Berkeley</strain>
        <tissue>Embryo</tissue>
    </source>
</reference>
<name>UNC4_DROME</name>
<feature type="chain" id="PRO_0000049348" description="Homeobox protein unc-4">
    <location>
        <begin position="1"/>
        <end position="588"/>
    </location>
</feature>
<feature type="DNA-binding region" description="Homeobox" evidence="2">
    <location>
        <begin position="243"/>
        <end position="302"/>
    </location>
</feature>
<feature type="region of interest" description="Disordered" evidence="3">
    <location>
        <begin position="1"/>
        <end position="73"/>
    </location>
</feature>
<feature type="region of interest" description="Disordered" evidence="3">
    <location>
        <begin position="210"/>
        <end position="247"/>
    </location>
</feature>
<feature type="region of interest" description="Disordered" evidence="3">
    <location>
        <begin position="299"/>
        <end position="333"/>
    </location>
</feature>
<feature type="region of interest" description="Disordered" evidence="3">
    <location>
        <begin position="377"/>
        <end position="500"/>
    </location>
</feature>
<feature type="region of interest" description="Disordered" evidence="3">
    <location>
        <begin position="522"/>
        <end position="557"/>
    </location>
</feature>
<feature type="compositionally biased region" description="Low complexity" evidence="3">
    <location>
        <begin position="16"/>
        <end position="36"/>
    </location>
</feature>
<feature type="compositionally biased region" description="Basic and acidic residues" evidence="3">
    <location>
        <begin position="37"/>
        <end position="46"/>
    </location>
</feature>
<feature type="compositionally biased region" description="Polar residues" evidence="3">
    <location>
        <begin position="56"/>
        <end position="65"/>
    </location>
</feature>
<feature type="compositionally biased region" description="Basic residues" evidence="3">
    <location>
        <begin position="299"/>
        <end position="308"/>
    </location>
</feature>
<feature type="compositionally biased region" description="Gly residues" evidence="3">
    <location>
        <begin position="413"/>
        <end position="431"/>
    </location>
</feature>
<feature type="compositionally biased region" description="Basic and acidic residues" evidence="3">
    <location>
        <begin position="488"/>
        <end position="498"/>
    </location>
</feature>
<feature type="compositionally biased region" description="Gly residues" evidence="3">
    <location>
        <begin position="524"/>
        <end position="534"/>
    </location>
</feature>
<feature type="compositionally biased region" description="Basic residues" evidence="3">
    <location>
        <begin position="535"/>
        <end position="549"/>
    </location>
</feature>
<feature type="sequence conflict" description="In Ref. 4; ABJ17079." evidence="6" ref="4">
    <original>AAATQ</original>
    <variation>KLSVD</variation>
    <location>
        <begin position="156"/>
        <end position="160"/>
    </location>
</feature>
<proteinExistence type="evidence at transcript level"/>
<organism>
    <name type="scientific">Drosophila melanogaster</name>
    <name type="common">Fruit fly</name>
    <dbReference type="NCBI Taxonomy" id="7227"/>
    <lineage>
        <taxon>Eukaryota</taxon>
        <taxon>Metazoa</taxon>
        <taxon>Ecdysozoa</taxon>
        <taxon>Arthropoda</taxon>
        <taxon>Hexapoda</taxon>
        <taxon>Insecta</taxon>
        <taxon>Pterygota</taxon>
        <taxon>Neoptera</taxon>
        <taxon>Endopterygota</taxon>
        <taxon>Diptera</taxon>
        <taxon>Brachycera</taxon>
        <taxon>Muscomorpha</taxon>
        <taxon>Ephydroidea</taxon>
        <taxon>Drosophilidae</taxon>
        <taxon>Drosophila</taxon>
        <taxon>Sophophora</taxon>
    </lineage>
</organism>
<dbReference type="EMBL" id="AE014298">
    <property type="protein sequence ID" value="AAF48762.2"/>
    <property type="molecule type" value="Genomic_DNA"/>
</dbReference>
<dbReference type="EMBL" id="AF086820">
    <property type="protein sequence ID" value="AAC36333.1"/>
    <property type="status" value="ALT_INIT"/>
    <property type="molecule type" value="mRNA"/>
</dbReference>
<dbReference type="EMBL" id="BT029145">
    <property type="protein sequence ID" value="ABJ17079.1"/>
    <property type="status" value="ALT_INIT"/>
    <property type="molecule type" value="mRNA"/>
</dbReference>
<dbReference type="RefSeq" id="NP_001285389.1">
    <property type="nucleotide sequence ID" value="NM_001298460.1"/>
</dbReference>
<dbReference type="RefSeq" id="NP_573242.2">
    <property type="nucleotide sequence ID" value="NM_133014.3"/>
</dbReference>
<dbReference type="SMR" id="O77215"/>
<dbReference type="BioGRID" id="59079">
    <property type="interactions" value="5"/>
</dbReference>
<dbReference type="FunCoup" id="O77215">
    <property type="interactions" value="1"/>
</dbReference>
<dbReference type="IntAct" id="O77215">
    <property type="interactions" value="2"/>
</dbReference>
<dbReference type="STRING" id="7227.FBpp0309491"/>
<dbReference type="PaxDb" id="7227-FBpp0074234"/>
<dbReference type="DNASU" id="32757"/>
<dbReference type="EnsemblMetazoa" id="FBtr0340626">
    <property type="protein sequence ID" value="FBpp0309490"/>
    <property type="gene ID" value="FBgn0024184"/>
</dbReference>
<dbReference type="EnsemblMetazoa" id="FBtr0340627">
    <property type="protein sequence ID" value="FBpp0309491"/>
    <property type="gene ID" value="FBgn0024184"/>
</dbReference>
<dbReference type="GeneID" id="32757"/>
<dbReference type="KEGG" id="dme:Dmel_CG6269"/>
<dbReference type="AGR" id="FB:FBgn0024184"/>
<dbReference type="CTD" id="32757"/>
<dbReference type="FlyBase" id="FBgn0024184">
    <property type="gene designation" value="unc-4"/>
</dbReference>
<dbReference type="VEuPathDB" id="VectorBase:FBgn0024184"/>
<dbReference type="eggNOG" id="KOG0490">
    <property type="taxonomic scope" value="Eukaryota"/>
</dbReference>
<dbReference type="HOGENOM" id="CLU_445694_0_0_1"/>
<dbReference type="InParanoid" id="O77215"/>
<dbReference type="OMA" id="FGKMEPM"/>
<dbReference type="OrthoDB" id="6159439at2759"/>
<dbReference type="SignaLink" id="O77215"/>
<dbReference type="BioGRID-ORCS" id="32757">
    <property type="hits" value="0 hits in 1 CRISPR screen"/>
</dbReference>
<dbReference type="GenomeRNAi" id="32757"/>
<dbReference type="PRO" id="PR:O77215"/>
<dbReference type="Proteomes" id="UP000000803">
    <property type="component" value="Chromosome X"/>
</dbReference>
<dbReference type="Bgee" id="FBgn0024184">
    <property type="expression patterns" value="Expressed in fat body cell in haltere and 26 other cell types or tissues"/>
</dbReference>
<dbReference type="ExpressionAtlas" id="O77215">
    <property type="expression patterns" value="baseline and differential"/>
</dbReference>
<dbReference type="GO" id="GO:0005634">
    <property type="term" value="C:nucleus"/>
    <property type="evidence" value="ECO:0007669"/>
    <property type="project" value="UniProtKB-SubCell"/>
</dbReference>
<dbReference type="GO" id="GO:0000981">
    <property type="term" value="F:DNA-binding transcription factor activity, RNA polymerase II-specific"/>
    <property type="evidence" value="ECO:0007669"/>
    <property type="project" value="InterPro"/>
</dbReference>
<dbReference type="GO" id="GO:1990837">
    <property type="term" value="F:sequence-specific double-stranded DNA binding"/>
    <property type="evidence" value="ECO:0000318"/>
    <property type="project" value="GO_Central"/>
</dbReference>
<dbReference type="GO" id="GO:0030154">
    <property type="term" value="P:cell differentiation"/>
    <property type="evidence" value="ECO:0007669"/>
    <property type="project" value="UniProtKB-KW"/>
</dbReference>
<dbReference type="GO" id="GO:0007399">
    <property type="term" value="P:nervous system development"/>
    <property type="evidence" value="ECO:0007669"/>
    <property type="project" value="UniProtKB-KW"/>
</dbReference>
<dbReference type="GO" id="GO:0010468">
    <property type="term" value="P:regulation of gene expression"/>
    <property type="evidence" value="ECO:0000318"/>
    <property type="project" value="GO_Central"/>
</dbReference>
<dbReference type="CDD" id="cd00086">
    <property type="entry name" value="homeodomain"/>
    <property type="match status" value="1"/>
</dbReference>
<dbReference type="FunFam" id="1.10.10.60:FF:000057">
    <property type="entry name" value="Short stature homeobox 2"/>
    <property type="match status" value="1"/>
</dbReference>
<dbReference type="Gene3D" id="1.10.10.60">
    <property type="entry name" value="Homeodomain-like"/>
    <property type="match status" value="1"/>
</dbReference>
<dbReference type="InterPro" id="IPR001356">
    <property type="entry name" value="HD"/>
</dbReference>
<dbReference type="InterPro" id="IPR017970">
    <property type="entry name" value="Homeobox_CS"/>
</dbReference>
<dbReference type="InterPro" id="IPR009057">
    <property type="entry name" value="Homeodomain-like_sf"/>
</dbReference>
<dbReference type="PANTHER" id="PTHR46799">
    <property type="entry name" value="HOMEOBOX PROTEIN UNC-4 HOMOLOG"/>
    <property type="match status" value="1"/>
</dbReference>
<dbReference type="PANTHER" id="PTHR46799:SF1">
    <property type="entry name" value="HOMEOBOX PROTEIN UNC-4 HOMOLOG"/>
    <property type="match status" value="1"/>
</dbReference>
<dbReference type="Pfam" id="PF00046">
    <property type="entry name" value="Homeodomain"/>
    <property type="match status" value="1"/>
</dbReference>
<dbReference type="SMART" id="SM00389">
    <property type="entry name" value="HOX"/>
    <property type="match status" value="1"/>
</dbReference>
<dbReference type="SUPFAM" id="SSF46689">
    <property type="entry name" value="Homeodomain-like"/>
    <property type="match status" value="1"/>
</dbReference>
<dbReference type="PROSITE" id="PS00027">
    <property type="entry name" value="HOMEOBOX_1"/>
    <property type="match status" value="1"/>
</dbReference>
<dbReference type="PROSITE" id="PS50071">
    <property type="entry name" value="HOMEOBOX_2"/>
    <property type="match status" value="1"/>
</dbReference>
<accession>O77215</accession>
<accession>Q058S3</accession>
<keyword id="KW-0217">Developmental protein</keyword>
<keyword id="KW-0221">Differentiation</keyword>
<keyword id="KW-0238">DNA-binding</keyword>
<keyword id="KW-0371">Homeobox</keyword>
<keyword id="KW-0524">Neurogenesis</keyword>
<keyword id="KW-0539">Nucleus</keyword>
<keyword id="KW-1185">Reference proteome</keyword>
<keyword id="KW-0804">Transcription</keyword>
<keyword id="KW-0805">Transcription regulation</keyword>